<proteinExistence type="inferred from homology"/>
<comment type="catalytic activity">
    <reaction evidence="1">
        <text>L-histidinol phosphate + 2-oxoglutarate = 3-(imidazol-4-yl)-2-oxopropyl phosphate + L-glutamate</text>
        <dbReference type="Rhea" id="RHEA:23744"/>
        <dbReference type="ChEBI" id="CHEBI:16810"/>
        <dbReference type="ChEBI" id="CHEBI:29985"/>
        <dbReference type="ChEBI" id="CHEBI:57766"/>
        <dbReference type="ChEBI" id="CHEBI:57980"/>
        <dbReference type="EC" id="2.6.1.9"/>
    </reaction>
</comment>
<comment type="cofactor">
    <cofactor evidence="1">
        <name>pyridoxal 5'-phosphate</name>
        <dbReference type="ChEBI" id="CHEBI:597326"/>
    </cofactor>
</comment>
<comment type="pathway">
    <text evidence="1">Amino-acid biosynthesis; L-histidine biosynthesis; L-histidine from 5-phospho-alpha-D-ribose 1-diphosphate: step 7/9.</text>
</comment>
<comment type="subunit">
    <text evidence="1">Homodimer.</text>
</comment>
<comment type="similarity">
    <text evidence="1">Belongs to the class-II pyridoxal-phosphate-dependent aminotransferase family. Histidinol-phosphate aminotransferase subfamily.</text>
</comment>
<gene>
    <name evidence="1" type="primary">hisC</name>
    <name type="ordered locus">ECP_2064</name>
</gene>
<protein>
    <recommendedName>
        <fullName evidence="1">Histidinol-phosphate aminotransferase</fullName>
        <ecNumber evidence="1">2.6.1.9</ecNumber>
    </recommendedName>
    <alternativeName>
        <fullName evidence="1">Imidazole acetol-phosphate transaminase</fullName>
    </alternativeName>
</protein>
<evidence type="ECO:0000255" key="1">
    <source>
        <dbReference type="HAMAP-Rule" id="MF_01023"/>
    </source>
</evidence>
<name>HIS8_ECOL5</name>
<dbReference type="EC" id="2.6.1.9" evidence="1"/>
<dbReference type="EMBL" id="CP000247">
    <property type="protein sequence ID" value="ABG70063.1"/>
    <property type="molecule type" value="Genomic_DNA"/>
</dbReference>
<dbReference type="RefSeq" id="WP_000108995.1">
    <property type="nucleotide sequence ID" value="NC_008253.1"/>
</dbReference>
<dbReference type="SMR" id="Q0TG66"/>
<dbReference type="KEGG" id="ecp:ECP_2064"/>
<dbReference type="HOGENOM" id="CLU_017584_3_1_6"/>
<dbReference type="UniPathway" id="UPA00031">
    <property type="reaction ID" value="UER00012"/>
</dbReference>
<dbReference type="Proteomes" id="UP000009182">
    <property type="component" value="Chromosome"/>
</dbReference>
<dbReference type="GO" id="GO:0004400">
    <property type="term" value="F:histidinol-phosphate transaminase activity"/>
    <property type="evidence" value="ECO:0007669"/>
    <property type="project" value="UniProtKB-UniRule"/>
</dbReference>
<dbReference type="GO" id="GO:0030170">
    <property type="term" value="F:pyridoxal phosphate binding"/>
    <property type="evidence" value="ECO:0007669"/>
    <property type="project" value="InterPro"/>
</dbReference>
<dbReference type="GO" id="GO:0000105">
    <property type="term" value="P:L-histidine biosynthetic process"/>
    <property type="evidence" value="ECO:0007669"/>
    <property type="project" value="UniProtKB-UniRule"/>
</dbReference>
<dbReference type="CDD" id="cd00609">
    <property type="entry name" value="AAT_like"/>
    <property type="match status" value="1"/>
</dbReference>
<dbReference type="FunFam" id="3.40.640.10:FF:000032">
    <property type="entry name" value="Histidinol-phosphate aminotransferase"/>
    <property type="match status" value="1"/>
</dbReference>
<dbReference type="FunFam" id="3.90.1150.10:FF:000042">
    <property type="entry name" value="Histidinol-phosphate aminotransferase"/>
    <property type="match status" value="1"/>
</dbReference>
<dbReference type="Gene3D" id="3.90.1150.10">
    <property type="entry name" value="Aspartate Aminotransferase, domain 1"/>
    <property type="match status" value="1"/>
</dbReference>
<dbReference type="Gene3D" id="3.40.640.10">
    <property type="entry name" value="Type I PLP-dependent aspartate aminotransferase-like (Major domain)"/>
    <property type="match status" value="1"/>
</dbReference>
<dbReference type="HAMAP" id="MF_01023">
    <property type="entry name" value="HisC_aminotrans_2"/>
    <property type="match status" value="1"/>
</dbReference>
<dbReference type="InterPro" id="IPR001917">
    <property type="entry name" value="Aminotrans_II_pyridoxalP_BS"/>
</dbReference>
<dbReference type="InterPro" id="IPR004839">
    <property type="entry name" value="Aminotransferase_I/II_large"/>
</dbReference>
<dbReference type="InterPro" id="IPR005861">
    <property type="entry name" value="HisP_aminotrans"/>
</dbReference>
<dbReference type="InterPro" id="IPR015424">
    <property type="entry name" value="PyrdxlP-dep_Trfase"/>
</dbReference>
<dbReference type="InterPro" id="IPR015421">
    <property type="entry name" value="PyrdxlP-dep_Trfase_major"/>
</dbReference>
<dbReference type="InterPro" id="IPR015422">
    <property type="entry name" value="PyrdxlP-dep_Trfase_small"/>
</dbReference>
<dbReference type="NCBIfam" id="TIGR01141">
    <property type="entry name" value="hisC"/>
    <property type="match status" value="1"/>
</dbReference>
<dbReference type="PANTHER" id="PTHR42885:SF2">
    <property type="entry name" value="HISTIDINOL-PHOSPHATE AMINOTRANSFERASE"/>
    <property type="match status" value="1"/>
</dbReference>
<dbReference type="PANTHER" id="PTHR42885">
    <property type="entry name" value="HISTIDINOL-PHOSPHATE AMINOTRANSFERASE-RELATED"/>
    <property type="match status" value="1"/>
</dbReference>
<dbReference type="Pfam" id="PF00155">
    <property type="entry name" value="Aminotran_1_2"/>
    <property type="match status" value="1"/>
</dbReference>
<dbReference type="SUPFAM" id="SSF53383">
    <property type="entry name" value="PLP-dependent transferases"/>
    <property type="match status" value="1"/>
</dbReference>
<dbReference type="PROSITE" id="PS00599">
    <property type="entry name" value="AA_TRANSFER_CLASS_2"/>
    <property type="match status" value="1"/>
</dbReference>
<sequence length="356" mass="39365">MSTVTITDLARENVRNLTPYQSARRLGGNGDVWLNANEYPTAVEFQLTQQTLNRYPECQPKVVIENYAQYAGVKPEQVLVSRGADEGIELLIRAFCEPGKDAILYCPPTYGMYSVSAETIGVECRTVPTLDNWQLDLQGISDKLDGVKVVYVCSPNNPTGQLINPQDFRTLLELTRGKAIVVADEAYIEFCPQASLAGWLAEYPHLAILRTLSKAFALAGLRCGFTLANEEVINLLMKVIAPYPLSTPVADIAAQALSPQGIVAMRERVAQIITEREYLIAALKEIPCVEQVFDSETNYILARFKASSAVFKSLWDQGIILRDQNKQPSLSGCLRITVGTREESQCVIDALRAEQV</sequence>
<feature type="chain" id="PRO_1000063476" description="Histidinol-phosphate aminotransferase">
    <location>
        <begin position="1"/>
        <end position="356"/>
    </location>
</feature>
<feature type="modified residue" description="N6-(pyridoxal phosphate)lysine" evidence="1">
    <location>
        <position position="214"/>
    </location>
</feature>
<reference key="1">
    <citation type="journal article" date="2006" name="Mol. Microbiol.">
        <title>Role of pathogenicity island-associated integrases in the genome plasticity of uropathogenic Escherichia coli strain 536.</title>
        <authorList>
            <person name="Hochhut B."/>
            <person name="Wilde C."/>
            <person name="Balling G."/>
            <person name="Middendorf B."/>
            <person name="Dobrindt U."/>
            <person name="Brzuszkiewicz E."/>
            <person name="Gottschalk G."/>
            <person name="Carniel E."/>
            <person name="Hacker J."/>
        </authorList>
    </citation>
    <scope>NUCLEOTIDE SEQUENCE [LARGE SCALE GENOMIC DNA]</scope>
    <source>
        <strain>536 / UPEC</strain>
    </source>
</reference>
<organism>
    <name type="scientific">Escherichia coli O6:K15:H31 (strain 536 / UPEC)</name>
    <dbReference type="NCBI Taxonomy" id="362663"/>
    <lineage>
        <taxon>Bacteria</taxon>
        <taxon>Pseudomonadati</taxon>
        <taxon>Pseudomonadota</taxon>
        <taxon>Gammaproteobacteria</taxon>
        <taxon>Enterobacterales</taxon>
        <taxon>Enterobacteriaceae</taxon>
        <taxon>Escherichia</taxon>
    </lineage>
</organism>
<accession>Q0TG66</accession>
<keyword id="KW-0028">Amino-acid biosynthesis</keyword>
<keyword id="KW-0032">Aminotransferase</keyword>
<keyword id="KW-0368">Histidine biosynthesis</keyword>
<keyword id="KW-0663">Pyridoxal phosphate</keyword>
<keyword id="KW-0808">Transferase</keyword>